<name>LEUD_SACD2</name>
<reference key="1">
    <citation type="journal article" date="2008" name="PLoS Genet.">
        <title>Complete genome sequence of the complex carbohydrate-degrading marine bacterium, Saccharophagus degradans strain 2-40 T.</title>
        <authorList>
            <person name="Weiner R.M."/>
            <person name="Taylor L.E. II"/>
            <person name="Henrissat B."/>
            <person name="Hauser L."/>
            <person name="Land M."/>
            <person name="Coutinho P.M."/>
            <person name="Rancurel C."/>
            <person name="Saunders E.H."/>
            <person name="Longmire A.G."/>
            <person name="Zhang H."/>
            <person name="Bayer E.A."/>
            <person name="Gilbert H.J."/>
            <person name="Larimer F."/>
            <person name="Zhulin I.B."/>
            <person name="Ekborg N.A."/>
            <person name="Lamed R."/>
            <person name="Richardson P.M."/>
            <person name="Borovok I."/>
            <person name="Hutcheson S."/>
        </authorList>
    </citation>
    <scope>NUCLEOTIDE SEQUENCE [LARGE SCALE GENOMIC DNA]</scope>
    <source>
        <strain>2-40 / ATCC 43961 / DSM 17024</strain>
    </source>
</reference>
<evidence type="ECO:0000255" key="1">
    <source>
        <dbReference type="HAMAP-Rule" id="MF_01031"/>
    </source>
</evidence>
<sequence>MRSFTTLNGLAAPMDRPNVDTDLIIPKQFLKSIQRTGFGANLFDELRYLDKGEPGRDNSNRPINPDFPLNFKRYEGASVLLARENFGCGSSREHAPWALDEYGFHCIIAPSFADIFFNNCFKNGILPIVLDEEIVESLFVEMYQTEGYRLVIDLPAQTVTTPSGNSYSFEVDEFRKHCLLKGLDDIGLTLQHADSITAYEAERAKRAPWLFAASE</sequence>
<comment type="function">
    <text evidence="1">Catalyzes the isomerization between 2-isopropylmalate and 3-isopropylmalate, via the formation of 2-isopropylmaleate.</text>
</comment>
<comment type="catalytic activity">
    <reaction evidence="1">
        <text>(2R,3S)-3-isopropylmalate = (2S)-2-isopropylmalate</text>
        <dbReference type="Rhea" id="RHEA:32287"/>
        <dbReference type="ChEBI" id="CHEBI:1178"/>
        <dbReference type="ChEBI" id="CHEBI:35121"/>
        <dbReference type="EC" id="4.2.1.33"/>
    </reaction>
</comment>
<comment type="pathway">
    <text evidence="1">Amino-acid biosynthesis; L-leucine biosynthesis; L-leucine from 3-methyl-2-oxobutanoate: step 2/4.</text>
</comment>
<comment type="subunit">
    <text evidence="1">Heterodimer of LeuC and LeuD.</text>
</comment>
<comment type="similarity">
    <text evidence="1">Belongs to the LeuD family. LeuD type 1 subfamily.</text>
</comment>
<keyword id="KW-0028">Amino-acid biosynthesis</keyword>
<keyword id="KW-0100">Branched-chain amino acid biosynthesis</keyword>
<keyword id="KW-0432">Leucine biosynthesis</keyword>
<keyword id="KW-0456">Lyase</keyword>
<keyword id="KW-1185">Reference proteome</keyword>
<proteinExistence type="inferred from homology"/>
<accession>Q21IY4</accession>
<dbReference type="EC" id="4.2.1.33" evidence="1"/>
<dbReference type="EMBL" id="CP000282">
    <property type="protein sequence ID" value="ABD81345.1"/>
    <property type="molecule type" value="Genomic_DNA"/>
</dbReference>
<dbReference type="RefSeq" id="WP_011468563.1">
    <property type="nucleotide sequence ID" value="NC_007912.1"/>
</dbReference>
<dbReference type="SMR" id="Q21IY4"/>
<dbReference type="STRING" id="203122.Sde_2085"/>
<dbReference type="GeneID" id="98613757"/>
<dbReference type="KEGG" id="sde:Sde_2085"/>
<dbReference type="eggNOG" id="COG0066">
    <property type="taxonomic scope" value="Bacteria"/>
</dbReference>
<dbReference type="HOGENOM" id="CLU_081378_0_3_6"/>
<dbReference type="OrthoDB" id="9777465at2"/>
<dbReference type="UniPathway" id="UPA00048">
    <property type="reaction ID" value="UER00071"/>
</dbReference>
<dbReference type="Proteomes" id="UP000001947">
    <property type="component" value="Chromosome"/>
</dbReference>
<dbReference type="GO" id="GO:0009316">
    <property type="term" value="C:3-isopropylmalate dehydratase complex"/>
    <property type="evidence" value="ECO:0007669"/>
    <property type="project" value="InterPro"/>
</dbReference>
<dbReference type="GO" id="GO:0003861">
    <property type="term" value="F:3-isopropylmalate dehydratase activity"/>
    <property type="evidence" value="ECO:0007669"/>
    <property type="project" value="UniProtKB-UniRule"/>
</dbReference>
<dbReference type="GO" id="GO:0009098">
    <property type="term" value="P:L-leucine biosynthetic process"/>
    <property type="evidence" value="ECO:0007669"/>
    <property type="project" value="UniProtKB-UniRule"/>
</dbReference>
<dbReference type="CDD" id="cd01577">
    <property type="entry name" value="IPMI_Swivel"/>
    <property type="match status" value="1"/>
</dbReference>
<dbReference type="FunFam" id="3.20.19.10:FF:000003">
    <property type="entry name" value="3-isopropylmalate dehydratase small subunit"/>
    <property type="match status" value="1"/>
</dbReference>
<dbReference type="Gene3D" id="3.20.19.10">
    <property type="entry name" value="Aconitase, domain 4"/>
    <property type="match status" value="1"/>
</dbReference>
<dbReference type="HAMAP" id="MF_01031">
    <property type="entry name" value="LeuD_type1"/>
    <property type="match status" value="1"/>
</dbReference>
<dbReference type="InterPro" id="IPR004431">
    <property type="entry name" value="3-IsopropMal_deHydase_ssu"/>
</dbReference>
<dbReference type="InterPro" id="IPR015928">
    <property type="entry name" value="Aconitase/3IPM_dehydase_swvl"/>
</dbReference>
<dbReference type="InterPro" id="IPR000573">
    <property type="entry name" value="AconitaseA/IPMdHydase_ssu_swvl"/>
</dbReference>
<dbReference type="InterPro" id="IPR033940">
    <property type="entry name" value="IPMI_Swivel"/>
</dbReference>
<dbReference type="InterPro" id="IPR050075">
    <property type="entry name" value="LeuD"/>
</dbReference>
<dbReference type="NCBIfam" id="TIGR00171">
    <property type="entry name" value="leuD"/>
    <property type="match status" value="1"/>
</dbReference>
<dbReference type="NCBIfam" id="NF002458">
    <property type="entry name" value="PRK01641.1"/>
    <property type="match status" value="1"/>
</dbReference>
<dbReference type="PANTHER" id="PTHR43345:SF5">
    <property type="entry name" value="3-ISOPROPYLMALATE DEHYDRATASE SMALL SUBUNIT"/>
    <property type="match status" value="1"/>
</dbReference>
<dbReference type="PANTHER" id="PTHR43345">
    <property type="entry name" value="3-ISOPROPYLMALATE DEHYDRATASE SMALL SUBUNIT 2-RELATED-RELATED"/>
    <property type="match status" value="1"/>
</dbReference>
<dbReference type="Pfam" id="PF00694">
    <property type="entry name" value="Aconitase_C"/>
    <property type="match status" value="1"/>
</dbReference>
<dbReference type="SUPFAM" id="SSF52016">
    <property type="entry name" value="LeuD/IlvD-like"/>
    <property type="match status" value="1"/>
</dbReference>
<feature type="chain" id="PRO_1000063827" description="3-isopropylmalate dehydratase small subunit">
    <location>
        <begin position="1"/>
        <end position="215"/>
    </location>
</feature>
<organism>
    <name type="scientific">Saccharophagus degradans (strain 2-40 / ATCC 43961 / DSM 17024)</name>
    <dbReference type="NCBI Taxonomy" id="203122"/>
    <lineage>
        <taxon>Bacteria</taxon>
        <taxon>Pseudomonadati</taxon>
        <taxon>Pseudomonadota</taxon>
        <taxon>Gammaproteobacteria</taxon>
        <taxon>Cellvibrionales</taxon>
        <taxon>Cellvibrionaceae</taxon>
        <taxon>Saccharophagus</taxon>
    </lineage>
</organism>
<protein>
    <recommendedName>
        <fullName evidence="1">3-isopropylmalate dehydratase small subunit</fullName>
        <ecNumber evidence="1">4.2.1.33</ecNumber>
    </recommendedName>
    <alternativeName>
        <fullName evidence="1">Alpha-IPM isomerase</fullName>
        <shortName evidence="1">IPMI</shortName>
    </alternativeName>
    <alternativeName>
        <fullName evidence="1">Isopropylmalate isomerase</fullName>
    </alternativeName>
</protein>
<gene>
    <name evidence="1" type="primary">leuD</name>
    <name type="ordered locus">Sde_2085</name>
</gene>